<comment type="function">
    <text>May play a role in signal transduction pathways that involve calcium as a second messenger.</text>
</comment>
<comment type="catalytic activity">
    <reaction>
        <text>L-seryl-[protein] + ATP = O-phospho-L-seryl-[protein] + ADP + H(+)</text>
        <dbReference type="Rhea" id="RHEA:17989"/>
        <dbReference type="Rhea" id="RHEA-COMP:9863"/>
        <dbReference type="Rhea" id="RHEA-COMP:11604"/>
        <dbReference type="ChEBI" id="CHEBI:15378"/>
        <dbReference type="ChEBI" id="CHEBI:29999"/>
        <dbReference type="ChEBI" id="CHEBI:30616"/>
        <dbReference type="ChEBI" id="CHEBI:83421"/>
        <dbReference type="ChEBI" id="CHEBI:456216"/>
        <dbReference type="EC" id="2.7.11.1"/>
    </reaction>
</comment>
<comment type="catalytic activity">
    <reaction>
        <text>L-threonyl-[protein] + ATP = O-phospho-L-threonyl-[protein] + ADP + H(+)</text>
        <dbReference type="Rhea" id="RHEA:46608"/>
        <dbReference type="Rhea" id="RHEA-COMP:11060"/>
        <dbReference type="Rhea" id="RHEA-COMP:11605"/>
        <dbReference type="ChEBI" id="CHEBI:15378"/>
        <dbReference type="ChEBI" id="CHEBI:30013"/>
        <dbReference type="ChEBI" id="CHEBI:30616"/>
        <dbReference type="ChEBI" id="CHEBI:61977"/>
        <dbReference type="ChEBI" id="CHEBI:456216"/>
        <dbReference type="EC" id="2.7.11.1"/>
    </reaction>
</comment>
<comment type="activity regulation">
    <text evidence="1">Activated by calcium. Autophosphorylation may play an important role in the regulation of the kinase activity (By similarity).</text>
</comment>
<comment type="subcellular location">
    <subcellularLocation>
        <location evidence="8 9 10">Cell membrane</location>
        <topology evidence="8 9 10">Lipid-anchor</topology>
    </subcellularLocation>
</comment>
<comment type="domain">
    <text evidence="1">There are 3 contiguous domains conserved in the CDPK subfamily: a kinase domain, an autoinhibitory (junction) domain and a calmodulin-like domain. The autoinhibitory domain (355-385) inactivates kinase activity under calcium-free conditions (By similarity).</text>
</comment>
<comment type="similarity">
    <text evidence="4">Belongs to the protein kinase superfamily. Ser/Thr protein kinase family. CDPK subfamily.</text>
</comment>
<sequence>MGNCFAKNHGLMKPQQNGNTTRSVEVGVTNQDPPSYTPQARTTQQPEKPGSVNSQPPPWRAAAAAPGLSPKTTTKSNSILENAFEDVKLFYTLGKELGRGQFGVTYLCTENSTGKKYACKSISKKKLVTKADKDDMRREIQIMQHLSGQPNIVEFKGAYEDEKAVNLVMELCAGGELFDRIIAKGHYTERAAASVCRQIVNVVKICHFMGVLHRDLKPENFLLSSKDEKALIKATDFGLSVFIEEGKVYRDIVGSAYYVAPEVLRRRYGKEVDIWSAGIILYILLSGVPPFWAETEKGIFDAILEGHIDFESQPWPSISSSAKDLVRRMLTADPKRRISAADVLQHPWLREGGEASDKPIDSAVLSRMKQFRAMNKLKKLALKVIAENIDTEEIQGLKAMFANIDTDNSGTITYEELKEGLAKLGSKLTEAEVKQLMDAADVDGNGSIDYIEFITATMHRHRLESNENLYKAFQHFDKDSSGYITIDELESALKEYGMGDDATIKEVLSDVDSDNDGRINYEEFCAMMRSGNPQQQQPRLF</sequence>
<gene>
    <name type="primary">CPK9</name>
    <name type="ordered locus">At3g20410</name>
    <name type="ORF">MQC12.23</name>
</gene>
<accession>Q38868</accession>
<protein>
    <recommendedName>
        <fullName>Calcium-dependent protein kinase 9</fullName>
        <ecNumber>2.7.11.1</ecNumber>
    </recommendedName>
    <alternativeName>
        <fullName>Calmodulin-domain protein kinase CDPK isoform 9</fullName>
    </alternativeName>
</protein>
<evidence type="ECO:0000250" key="1"/>
<evidence type="ECO:0000250" key="2">
    <source>
        <dbReference type="UniProtKB" id="Q9FKW4"/>
    </source>
</evidence>
<evidence type="ECO:0000255" key="3"/>
<evidence type="ECO:0000255" key="4">
    <source>
        <dbReference type="PROSITE-ProRule" id="PRU00159"/>
    </source>
</evidence>
<evidence type="ECO:0000255" key="5">
    <source>
        <dbReference type="PROSITE-ProRule" id="PRU00448"/>
    </source>
</evidence>
<evidence type="ECO:0000255" key="6">
    <source>
        <dbReference type="PROSITE-ProRule" id="PRU10027"/>
    </source>
</evidence>
<evidence type="ECO:0000256" key="7">
    <source>
        <dbReference type="SAM" id="MobiDB-lite"/>
    </source>
</evidence>
<evidence type="ECO:0000269" key="8">
    <source>
    </source>
</evidence>
<evidence type="ECO:0000269" key="9">
    <source>
    </source>
</evidence>
<evidence type="ECO:0000269" key="10">
    <source>
    </source>
</evidence>
<evidence type="ECO:0007744" key="11">
    <source>
    </source>
</evidence>
<name>CDPK9_ARATH</name>
<dbReference type="EC" id="2.7.11.1"/>
<dbReference type="EMBL" id="U31751">
    <property type="protein sequence ID" value="AAB03242.1"/>
    <property type="molecule type" value="mRNA"/>
</dbReference>
<dbReference type="EMBL" id="AB024036">
    <property type="protein sequence ID" value="BAB02824.1"/>
    <property type="molecule type" value="Genomic_DNA"/>
</dbReference>
<dbReference type="EMBL" id="CP002686">
    <property type="protein sequence ID" value="AEE76375.1"/>
    <property type="molecule type" value="Genomic_DNA"/>
</dbReference>
<dbReference type="EMBL" id="CP002686">
    <property type="protein sequence ID" value="ANM65866.1"/>
    <property type="molecule type" value="Genomic_DNA"/>
</dbReference>
<dbReference type="EMBL" id="AY120727">
    <property type="protein sequence ID" value="AAM53285.1"/>
    <property type="molecule type" value="mRNA"/>
</dbReference>
<dbReference type="EMBL" id="BT008898">
    <property type="protein sequence ID" value="AAP68337.1"/>
    <property type="molecule type" value="mRNA"/>
</dbReference>
<dbReference type="RefSeq" id="NP_001327803.1">
    <property type="nucleotide sequence ID" value="NM_001338479.1"/>
</dbReference>
<dbReference type="RefSeq" id="NP_188676.1">
    <property type="nucleotide sequence ID" value="NM_112932.3"/>
</dbReference>
<dbReference type="SMR" id="Q38868"/>
<dbReference type="BioGRID" id="6918">
    <property type="interactions" value="4"/>
</dbReference>
<dbReference type="FunCoup" id="Q38868">
    <property type="interactions" value="2067"/>
</dbReference>
<dbReference type="STRING" id="3702.Q38868"/>
<dbReference type="iPTMnet" id="Q38868"/>
<dbReference type="PaxDb" id="3702-AT3G20410.1"/>
<dbReference type="ProteomicsDB" id="223881"/>
<dbReference type="EnsemblPlants" id="AT3G20410.1">
    <property type="protein sequence ID" value="AT3G20410.1"/>
    <property type="gene ID" value="AT3G20410"/>
</dbReference>
<dbReference type="EnsemblPlants" id="AT3G20410.2">
    <property type="protein sequence ID" value="AT3G20410.2"/>
    <property type="gene ID" value="AT3G20410"/>
</dbReference>
<dbReference type="GeneID" id="821586"/>
<dbReference type="Gramene" id="AT3G20410.1">
    <property type="protein sequence ID" value="AT3G20410.1"/>
    <property type="gene ID" value="AT3G20410"/>
</dbReference>
<dbReference type="Gramene" id="AT3G20410.2">
    <property type="protein sequence ID" value="AT3G20410.2"/>
    <property type="gene ID" value="AT3G20410"/>
</dbReference>
<dbReference type="KEGG" id="ath:AT3G20410"/>
<dbReference type="Araport" id="AT3G20410"/>
<dbReference type="TAIR" id="AT3G20410">
    <property type="gene designation" value="CPK9"/>
</dbReference>
<dbReference type="eggNOG" id="KOG0032">
    <property type="taxonomic scope" value="Eukaryota"/>
</dbReference>
<dbReference type="HOGENOM" id="CLU_000288_37_4_1"/>
<dbReference type="InParanoid" id="Q38868"/>
<dbReference type="OMA" id="MQCNNDE"/>
<dbReference type="OrthoDB" id="40902at2759"/>
<dbReference type="PhylomeDB" id="Q38868"/>
<dbReference type="PRO" id="PR:Q38868"/>
<dbReference type="Proteomes" id="UP000006548">
    <property type="component" value="Chromosome 3"/>
</dbReference>
<dbReference type="ExpressionAtlas" id="Q38868">
    <property type="expression patterns" value="baseline and differential"/>
</dbReference>
<dbReference type="GO" id="GO:0005829">
    <property type="term" value="C:cytosol"/>
    <property type="evidence" value="ECO:0007005"/>
    <property type="project" value="TAIR"/>
</dbReference>
<dbReference type="GO" id="GO:0005886">
    <property type="term" value="C:plasma membrane"/>
    <property type="evidence" value="ECO:0007005"/>
    <property type="project" value="TAIR"/>
</dbReference>
<dbReference type="GO" id="GO:0005524">
    <property type="term" value="F:ATP binding"/>
    <property type="evidence" value="ECO:0007669"/>
    <property type="project" value="UniProtKB-KW"/>
</dbReference>
<dbReference type="GO" id="GO:0005509">
    <property type="term" value="F:calcium ion binding"/>
    <property type="evidence" value="ECO:0007669"/>
    <property type="project" value="InterPro"/>
</dbReference>
<dbReference type="GO" id="GO:0004683">
    <property type="term" value="F:calcium/calmodulin-dependent protein kinase activity"/>
    <property type="evidence" value="ECO:0000250"/>
    <property type="project" value="TAIR"/>
</dbReference>
<dbReference type="GO" id="GO:0106310">
    <property type="term" value="F:protein serine kinase activity"/>
    <property type="evidence" value="ECO:0007669"/>
    <property type="project" value="RHEA"/>
</dbReference>
<dbReference type="GO" id="GO:0007165">
    <property type="term" value="P:signal transduction"/>
    <property type="evidence" value="ECO:0000304"/>
    <property type="project" value="TAIR"/>
</dbReference>
<dbReference type="CDD" id="cd05117">
    <property type="entry name" value="STKc_CAMK"/>
    <property type="match status" value="1"/>
</dbReference>
<dbReference type="FunFam" id="1.10.238.10:FF:000015">
    <property type="entry name" value="Calcium-dependent protein kinase 1"/>
    <property type="match status" value="1"/>
</dbReference>
<dbReference type="FunFam" id="3.30.200.20:FF:000004">
    <property type="entry name" value="Calcium-dependent protein kinase 1"/>
    <property type="match status" value="1"/>
</dbReference>
<dbReference type="FunFam" id="1.10.510.10:FF:000056">
    <property type="entry name" value="calcium-dependent protein kinase 1"/>
    <property type="match status" value="1"/>
</dbReference>
<dbReference type="Gene3D" id="1.10.238.10">
    <property type="entry name" value="EF-hand"/>
    <property type="match status" value="1"/>
</dbReference>
<dbReference type="Gene3D" id="3.30.200.20">
    <property type="entry name" value="Phosphorylase Kinase, domain 1"/>
    <property type="match status" value="1"/>
</dbReference>
<dbReference type="Gene3D" id="1.10.510.10">
    <property type="entry name" value="Transferase(Phosphotransferase) domain 1"/>
    <property type="match status" value="1"/>
</dbReference>
<dbReference type="InterPro" id="IPR050205">
    <property type="entry name" value="CDPK_Ser/Thr_kinases"/>
</dbReference>
<dbReference type="InterPro" id="IPR011992">
    <property type="entry name" value="EF-hand-dom_pair"/>
</dbReference>
<dbReference type="InterPro" id="IPR018247">
    <property type="entry name" value="EF_Hand_1_Ca_BS"/>
</dbReference>
<dbReference type="InterPro" id="IPR002048">
    <property type="entry name" value="EF_hand_dom"/>
</dbReference>
<dbReference type="InterPro" id="IPR011009">
    <property type="entry name" value="Kinase-like_dom_sf"/>
</dbReference>
<dbReference type="InterPro" id="IPR000719">
    <property type="entry name" value="Prot_kinase_dom"/>
</dbReference>
<dbReference type="InterPro" id="IPR017441">
    <property type="entry name" value="Protein_kinase_ATP_BS"/>
</dbReference>
<dbReference type="InterPro" id="IPR008271">
    <property type="entry name" value="Ser/Thr_kinase_AS"/>
</dbReference>
<dbReference type="PANTHER" id="PTHR24349">
    <property type="entry name" value="SERINE/THREONINE-PROTEIN KINASE"/>
    <property type="match status" value="1"/>
</dbReference>
<dbReference type="Pfam" id="PF13499">
    <property type="entry name" value="EF-hand_7"/>
    <property type="match status" value="2"/>
</dbReference>
<dbReference type="Pfam" id="PF00069">
    <property type="entry name" value="Pkinase"/>
    <property type="match status" value="1"/>
</dbReference>
<dbReference type="SMART" id="SM00054">
    <property type="entry name" value="EFh"/>
    <property type="match status" value="4"/>
</dbReference>
<dbReference type="SMART" id="SM00220">
    <property type="entry name" value="S_TKc"/>
    <property type="match status" value="1"/>
</dbReference>
<dbReference type="SUPFAM" id="SSF47473">
    <property type="entry name" value="EF-hand"/>
    <property type="match status" value="1"/>
</dbReference>
<dbReference type="SUPFAM" id="SSF56112">
    <property type="entry name" value="Protein kinase-like (PK-like)"/>
    <property type="match status" value="1"/>
</dbReference>
<dbReference type="PROSITE" id="PS00018">
    <property type="entry name" value="EF_HAND_1"/>
    <property type="match status" value="4"/>
</dbReference>
<dbReference type="PROSITE" id="PS50222">
    <property type="entry name" value="EF_HAND_2"/>
    <property type="match status" value="4"/>
</dbReference>
<dbReference type="PROSITE" id="PS00107">
    <property type="entry name" value="PROTEIN_KINASE_ATP"/>
    <property type="match status" value="1"/>
</dbReference>
<dbReference type="PROSITE" id="PS50011">
    <property type="entry name" value="PROTEIN_KINASE_DOM"/>
    <property type="match status" value="1"/>
</dbReference>
<dbReference type="PROSITE" id="PS00108">
    <property type="entry name" value="PROTEIN_KINASE_ST"/>
    <property type="match status" value="1"/>
</dbReference>
<keyword id="KW-0067">ATP-binding</keyword>
<keyword id="KW-0106">Calcium</keyword>
<keyword id="KW-1003">Cell membrane</keyword>
<keyword id="KW-0418">Kinase</keyword>
<keyword id="KW-0449">Lipoprotein</keyword>
<keyword id="KW-0472">Membrane</keyword>
<keyword id="KW-0479">Metal-binding</keyword>
<keyword id="KW-0519">Myristate</keyword>
<keyword id="KW-0547">Nucleotide-binding</keyword>
<keyword id="KW-0597">Phosphoprotein</keyword>
<keyword id="KW-1185">Reference proteome</keyword>
<keyword id="KW-0677">Repeat</keyword>
<keyword id="KW-0723">Serine/threonine-protein kinase</keyword>
<keyword id="KW-0808">Transferase</keyword>
<organism>
    <name type="scientific">Arabidopsis thaliana</name>
    <name type="common">Mouse-ear cress</name>
    <dbReference type="NCBI Taxonomy" id="3702"/>
    <lineage>
        <taxon>Eukaryota</taxon>
        <taxon>Viridiplantae</taxon>
        <taxon>Streptophyta</taxon>
        <taxon>Embryophyta</taxon>
        <taxon>Tracheophyta</taxon>
        <taxon>Spermatophyta</taxon>
        <taxon>Magnoliopsida</taxon>
        <taxon>eudicotyledons</taxon>
        <taxon>Gunneridae</taxon>
        <taxon>Pentapetalae</taxon>
        <taxon>rosids</taxon>
        <taxon>malvids</taxon>
        <taxon>Brassicales</taxon>
        <taxon>Brassicaceae</taxon>
        <taxon>Camelineae</taxon>
        <taxon>Arabidopsis</taxon>
    </lineage>
</organism>
<proteinExistence type="evidence at protein level"/>
<feature type="initiator methionine" description="Removed" evidence="3">
    <location>
        <position position="1"/>
    </location>
</feature>
<feature type="chain" id="PRO_0000363334" description="Calcium-dependent protein kinase 9">
    <location>
        <begin position="2"/>
        <end position="541"/>
    </location>
</feature>
<feature type="domain" description="Protein kinase" evidence="4">
    <location>
        <begin position="91"/>
        <end position="349"/>
    </location>
</feature>
<feature type="domain" description="EF-hand 1" evidence="5">
    <location>
        <begin position="392"/>
        <end position="427"/>
    </location>
</feature>
<feature type="domain" description="EF-hand 2" evidence="5">
    <location>
        <begin position="428"/>
        <end position="463"/>
    </location>
</feature>
<feature type="domain" description="EF-hand 3" evidence="5">
    <location>
        <begin position="464"/>
        <end position="499"/>
    </location>
</feature>
<feature type="domain" description="EF-hand 4" evidence="5">
    <location>
        <begin position="500"/>
        <end position="534"/>
    </location>
</feature>
<feature type="region of interest" description="Disordered" evidence="7">
    <location>
        <begin position="1"/>
        <end position="75"/>
    </location>
</feature>
<feature type="region of interest" description="Autoinhibitory domain" evidence="1">
    <location>
        <begin position="355"/>
        <end position="385"/>
    </location>
</feature>
<feature type="compositionally biased region" description="Polar residues" evidence="7">
    <location>
        <begin position="14"/>
        <end position="54"/>
    </location>
</feature>
<feature type="active site" description="Proton acceptor" evidence="4 6">
    <location>
        <position position="215"/>
    </location>
</feature>
<feature type="binding site" evidence="4">
    <location>
        <begin position="97"/>
        <end position="105"/>
    </location>
    <ligand>
        <name>ATP</name>
        <dbReference type="ChEBI" id="CHEBI:30616"/>
    </ligand>
</feature>
<feature type="binding site" evidence="4">
    <location>
        <position position="120"/>
    </location>
    <ligand>
        <name>ATP</name>
        <dbReference type="ChEBI" id="CHEBI:30616"/>
    </ligand>
</feature>
<feature type="binding site" evidence="5">
    <location>
        <position position="405"/>
    </location>
    <ligand>
        <name>Ca(2+)</name>
        <dbReference type="ChEBI" id="CHEBI:29108"/>
        <label>1</label>
    </ligand>
</feature>
<feature type="binding site" evidence="5">
    <location>
        <position position="407"/>
    </location>
    <ligand>
        <name>Ca(2+)</name>
        <dbReference type="ChEBI" id="CHEBI:29108"/>
        <label>1</label>
    </ligand>
</feature>
<feature type="binding site" evidence="5">
    <location>
        <position position="409"/>
    </location>
    <ligand>
        <name>Ca(2+)</name>
        <dbReference type="ChEBI" id="CHEBI:29108"/>
        <label>1</label>
    </ligand>
</feature>
<feature type="binding site" evidence="5">
    <location>
        <position position="411"/>
    </location>
    <ligand>
        <name>Ca(2+)</name>
        <dbReference type="ChEBI" id="CHEBI:29108"/>
        <label>1</label>
    </ligand>
</feature>
<feature type="binding site" evidence="5">
    <location>
        <position position="416"/>
    </location>
    <ligand>
        <name>Ca(2+)</name>
        <dbReference type="ChEBI" id="CHEBI:29108"/>
        <label>1</label>
    </ligand>
</feature>
<feature type="binding site" evidence="5">
    <location>
        <position position="441"/>
    </location>
    <ligand>
        <name>Ca(2+)</name>
        <dbReference type="ChEBI" id="CHEBI:29108"/>
        <label>2</label>
    </ligand>
</feature>
<feature type="binding site" evidence="5">
    <location>
        <position position="443"/>
    </location>
    <ligand>
        <name>Ca(2+)</name>
        <dbReference type="ChEBI" id="CHEBI:29108"/>
        <label>2</label>
    </ligand>
</feature>
<feature type="binding site" evidence="5">
    <location>
        <position position="445"/>
    </location>
    <ligand>
        <name>Ca(2+)</name>
        <dbReference type="ChEBI" id="CHEBI:29108"/>
        <label>2</label>
    </ligand>
</feature>
<feature type="binding site" evidence="5">
    <location>
        <position position="447"/>
    </location>
    <ligand>
        <name>Ca(2+)</name>
        <dbReference type="ChEBI" id="CHEBI:29108"/>
        <label>2</label>
    </ligand>
</feature>
<feature type="binding site" evidence="5">
    <location>
        <position position="452"/>
    </location>
    <ligand>
        <name>Ca(2+)</name>
        <dbReference type="ChEBI" id="CHEBI:29108"/>
        <label>2</label>
    </ligand>
</feature>
<feature type="binding site" evidence="5">
    <location>
        <position position="477"/>
    </location>
    <ligand>
        <name>Ca(2+)</name>
        <dbReference type="ChEBI" id="CHEBI:29108"/>
        <label>3</label>
    </ligand>
</feature>
<feature type="binding site" evidence="5">
    <location>
        <position position="479"/>
    </location>
    <ligand>
        <name>Ca(2+)</name>
        <dbReference type="ChEBI" id="CHEBI:29108"/>
        <label>3</label>
    </ligand>
</feature>
<feature type="binding site" evidence="5">
    <location>
        <position position="481"/>
    </location>
    <ligand>
        <name>Ca(2+)</name>
        <dbReference type="ChEBI" id="CHEBI:29108"/>
        <label>3</label>
    </ligand>
</feature>
<feature type="binding site" evidence="5">
    <location>
        <position position="483"/>
    </location>
    <ligand>
        <name>Ca(2+)</name>
        <dbReference type="ChEBI" id="CHEBI:29108"/>
        <label>3</label>
    </ligand>
</feature>
<feature type="binding site" evidence="5">
    <location>
        <position position="488"/>
    </location>
    <ligand>
        <name>Ca(2+)</name>
        <dbReference type="ChEBI" id="CHEBI:29108"/>
        <label>3</label>
    </ligand>
</feature>
<feature type="binding site" evidence="5">
    <location>
        <position position="512"/>
    </location>
    <ligand>
        <name>Ca(2+)</name>
        <dbReference type="ChEBI" id="CHEBI:29108"/>
        <label>4</label>
    </ligand>
</feature>
<feature type="binding site" evidence="5">
    <location>
        <position position="514"/>
    </location>
    <ligand>
        <name>Ca(2+)</name>
        <dbReference type="ChEBI" id="CHEBI:29108"/>
        <label>4</label>
    </ligand>
</feature>
<feature type="binding site" evidence="5">
    <location>
        <position position="516"/>
    </location>
    <ligand>
        <name>Ca(2+)</name>
        <dbReference type="ChEBI" id="CHEBI:29108"/>
        <label>4</label>
    </ligand>
</feature>
<feature type="binding site" evidence="5">
    <location>
        <position position="518"/>
    </location>
    <ligand>
        <name>Ca(2+)</name>
        <dbReference type="ChEBI" id="CHEBI:29108"/>
        <label>4</label>
    </ligand>
</feature>
<feature type="binding site" evidence="5">
    <location>
        <position position="523"/>
    </location>
    <ligand>
        <name>Ca(2+)</name>
        <dbReference type="ChEBI" id="CHEBI:29108"/>
        <label>4</label>
    </ligand>
</feature>
<feature type="modified residue" description="Phosphoserine" evidence="11">
    <location>
        <position position="69"/>
    </location>
</feature>
<feature type="modified residue" description="Phosphoserine" evidence="2">
    <location>
        <position position="255"/>
    </location>
</feature>
<feature type="lipid moiety-binding region" description="N-myristoyl glycine" evidence="10">
    <location>
        <position position="2"/>
    </location>
</feature>
<reference key="1">
    <citation type="journal article" date="1996" name="Plant Mol. Biol.">
        <title>Characterization of eight new members of the calmodulin-like domain protein kinase gene family from Arabidopsis thaliana.</title>
        <authorList>
            <person name="Hrabak E.M."/>
            <person name="Dickmann L.J."/>
            <person name="Satterlee J.S."/>
            <person name="Sussman M.R."/>
        </authorList>
    </citation>
    <scope>NUCLEOTIDE SEQUENCE [MRNA]</scope>
    <source>
        <strain>cv. Columbia</strain>
    </source>
</reference>
<reference key="2">
    <citation type="journal article" date="2000" name="DNA Res.">
        <title>Structural analysis of Arabidopsis thaliana chromosome 3. I. Sequence features of the regions of 4,504,864 bp covered by sixty P1 and TAC clones.</title>
        <authorList>
            <person name="Sato S."/>
            <person name="Nakamura Y."/>
            <person name="Kaneko T."/>
            <person name="Katoh T."/>
            <person name="Asamizu E."/>
            <person name="Tabata S."/>
        </authorList>
    </citation>
    <scope>NUCLEOTIDE SEQUENCE [LARGE SCALE GENOMIC DNA]</scope>
    <source>
        <strain>cv. Columbia</strain>
    </source>
</reference>
<reference key="3">
    <citation type="journal article" date="2017" name="Plant J.">
        <title>Araport11: a complete reannotation of the Arabidopsis thaliana reference genome.</title>
        <authorList>
            <person name="Cheng C.Y."/>
            <person name="Krishnakumar V."/>
            <person name="Chan A.P."/>
            <person name="Thibaud-Nissen F."/>
            <person name="Schobel S."/>
            <person name="Town C.D."/>
        </authorList>
    </citation>
    <scope>GENOME REANNOTATION</scope>
    <source>
        <strain>cv. Columbia</strain>
    </source>
</reference>
<reference key="4">
    <citation type="journal article" date="2003" name="Science">
        <title>Empirical analysis of transcriptional activity in the Arabidopsis genome.</title>
        <authorList>
            <person name="Yamada K."/>
            <person name="Lim J."/>
            <person name="Dale J.M."/>
            <person name="Chen H."/>
            <person name="Shinn P."/>
            <person name="Palm C.J."/>
            <person name="Southwick A.M."/>
            <person name="Wu H.C."/>
            <person name="Kim C.J."/>
            <person name="Nguyen M."/>
            <person name="Pham P.K."/>
            <person name="Cheuk R.F."/>
            <person name="Karlin-Newmann G."/>
            <person name="Liu S.X."/>
            <person name="Lam B."/>
            <person name="Sakano H."/>
            <person name="Wu T."/>
            <person name="Yu G."/>
            <person name="Miranda M."/>
            <person name="Quach H.L."/>
            <person name="Tripp M."/>
            <person name="Chang C.H."/>
            <person name="Lee J.M."/>
            <person name="Toriumi M.J."/>
            <person name="Chan M.M."/>
            <person name="Tang C.C."/>
            <person name="Onodera C.S."/>
            <person name="Deng J.M."/>
            <person name="Akiyama K."/>
            <person name="Ansari Y."/>
            <person name="Arakawa T."/>
            <person name="Banh J."/>
            <person name="Banno F."/>
            <person name="Bowser L."/>
            <person name="Brooks S.Y."/>
            <person name="Carninci P."/>
            <person name="Chao Q."/>
            <person name="Choy N."/>
            <person name="Enju A."/>
            <person name="Goldsmith A.D."/>
            <person name="Gurjal M."/>
            <person name="Hansen N.F."/>
            <person name="Hayashizaki Y."/>
            <person name="Johnson-Hopson C."/>
            <person name="Hsuan V.W."/>
            <person name="Iida K."/>
            <person name="Karnes M."/>
            <person name="Khan S."/>
            <person name="Koesema E."/>
            <person name="Ishida J."/>
            <person name="Jiang P.X."/>
            <person name="Jones T."/>
            <person name="Kawai J."/>
            <person name="Kamiya A."/>
            <person name="Meyers C."/>
            <person name="Nakajima M."/>
            <person name="Narusaka M."/>
            <person name="Seki M."/>
            <person name="Sakurai T."/>
            <person name="Satou M."/>
            <person name="Tamse R."/>
            <person name="Vaysberg M."/>
            <person name="Wallender E.K."/>
            <person name="Wong C."/>
            <person name="Yamamura Y."/>
            <person name="Yuan S."/>
            <person name="Shinozaki K."/>
            <person name="Davis R.W."/>
            <person name="Theologis A."/>
            <person name="Ecker J.R."/>
        </authorList>
    </citation>
    <scope>NUCLEOTIDE SEQUENCE [LARGE SCALE MRNA]</scope>
    <source>
        <strain>cv. Columbia</strain>
    </source>
</reference>
<reference key="5">
    <citation type="journal article" date="2001" name="New Phytol.">
        <title>The CDPK superfamily of protein kinases.</title>
        <authorList>
            <person name="Harmon A.C."/>
            <person name="Gribskov M."/>
            <person name="Gubrium E."/>
            <person name="Harper J.F."/>
        </authorList>
    </citation>
    <scope>GENE FAMILY</scope>
    <scope>NOMENCLATURE</scope>
</reference>
<reference key="6">
    <citation type="journal article" date="2002" name="Plant Physiol.">
        <title>Calcium signaling through protein kinases. The Arabidopsis calcium-dependent protein kinase gene family.</title>
        <authorList>
            <person name="Cheng S.-H."/>
            <person name="Willmann M.R."/>
            <person name="Chen H.-C."/>
            <person name="Sheen J."/>
        </authorList>
    </citation>
    <scope>GENE FAMILY</scope>
    <scope>NOMENCLATURE</scope>
</reference>
<reference key="7">
    <citation type="journal article" date="2003" name="Plant Physiol.">
        <title>The Arabidopsis CDPK-SnRK superfamily of protein kinases.</title>
        <authorList>
            <person name="Hrabak E.M."/>
            <person name="Chan C.W.M."/>
            <person name="Gribskov M."/>
            <person name="Harper J.F."/>
            <person name="Choi J.H."/>
            <person name="Halford N."/>
            <person name="Kudla J."/>
            <person name="Luan S."/>
            <person name="Nimmo H.G."/>
            <person name="Sussman M.R."/>
            <person name="Thomas M."/>
            <person name="Walker-Simmons K."/>
            <person name="Zhu J.-K."/>
            <person name="Harmon A.C."/>
        </authorList>
    </citation>
    <scope>GENE FAMILY</scope>
    <scope>NOMENCLATURE</scope>
</reference>
<reference key="8">
    <citation type="journal article" date="2003" name="Plant Physiol.">
        <title>Subcellular targeting of nine calcium-dependent protein kinase isoforms from Arabidopsis.</title>
        <authorList>
            <person name="Dammann C."/>
            <person name="Ichida A."/>
            <person name="Hong B."/>
            <person name="Romanowsky S.M."/>
            <person name="Hrabak E.M."/>
            <person name="Harmon A.C."/>
            <person name="Pickard B.G."/>
            <person name="Harper J.F."/>
        </authorList>
    </citation>
    <scope>SUBCELLULAR LOCATION</scope>
</reference>
<reference key="9">
    <citation type="journal article" date="2004" name="Plant Cell">
        <title>Phosphoproteomics of the Arabidopsis plasma membrane and a new phosphorylation site database.</title>
        <authorList>
            <person name="Nuehse T.S."/>
            <person name="Stensballe A."/>
            <person name="Jensen O.N."/>
            <person name="Peck S.C."/>
        </authorList>
    </citation>
    <scope>SUBCELLULAR LOCATION</scope>
</reference>
<reference key="10">
    <citation type="journal article" date="2008" name="Cell Cycle">
        <title>Experimental testing of predicted myristoylation targets involved in asymmetric cell division and calcium-dependent signalling.</title>
        <authorList>
            <person name="Benetka W."/>
            <person name="Mehlmer N."/>
            <person name="Maurer-Stroh S."/>
            <person name="Sammer M."/>
            <person name="Koranda M."/>
            <person name="Neumueller R."/>
            <person name="Betschinger J."/>
            <person name="Knoblich J.A."/>
            <person name="Teige M."/>
            <person name="Eisenhaber F."/>
        </authorList>
    </citation>
    <scope>MYRISTOYLATION AT GLY-2</scope>
    <scope>SUBCELLULAR LOCATION</scope>
</reference>
<reference key="11">
    <citation type="journal article" date="2009" name="Plant Physiol.">
        <title>Large-scale Arabidopsis phosphoproteome profiling reveals novel chloroplast kinase substrates and phosphorylation networks.</title>
        <authorList>
            <person name="Reiland S."/>
            <person name="Messerli G."/>
            <person name="Baerenfaller K."/>
            <person name="Gerrits B."/>
            <person name="Endler A."/>
            <person name="Grossmann J."/>
            <person name="Gruissem W."/>
            <person name="Baginsky S."/>
        </authorList>
    </citation>
    <scope>PHOSPHORYLATION [LARGE SCALE ANALYSIS] AT SER-69</scope>
    <scope>IDENTIFICATION BY MASS SPECTROMETRY [LARGE SCALE ANALYSIS]</scope>
</reference>